<comment type="function">
    <text evidence="1">Specifically methylates the cytosine at position 1962 (m5C1962) of 23S rRNA.</text>
</comment>
<comment type="catalytic activity">
    <reaction evidence="1">
        <text>cytidine(1962) in 23S rRNA + S-adenosyl-L-methionine = 5-methylcytidine(1962) in 23S rRNA + S-adenosyl-L-homocysteine + H(+)</text>
        <dbReference type="Rhea" id="RHEA:42912"/>
        <dbReference type="Rhea" id="RHEA-COMP:10382"/>
        <dbReference type="Rhea" id="RHEA-COMP:10386"/>
        <dbReference type="ChEBI" id="CHEBI:15378"/>
        <dbReference type="ChEBI" id="CHEBI:57856"/>
        <dbReference type="ChEBI" id="CHEBI:59789"/>
        <dbReference type="ChEBI" id="CHEBI:74483"/>
        <dbReference type="ChEBI" id="CHEBI:82748"/>
        <dbReference type="EC" id="2.1.1.191"/>
    </reaction>
</comment>
<comment type="subcellular location">
    <subcellularLocation>
        <location evidence="1">Cytoplasm</location>
    </subcellularLocation>
</comment>
<comment type="similarity">
    <text evidence="1">Belongs to the methyltransferase superfamily. RlmI family.</text>
</comment>
<keyword id="KW-0963">Cytoplasm</keyword>
<keyword id="KW-0489">Methyltransferase</keyword>
<keyword id="KW-0694">RNA-binding</keyword>
<keyword id="KW-0698">rRNA processing</keyword>
<keyword id="KW-0949">S-adenosyl-L-methionine</keyword>
<keyword id="KW-0808">Transferase</keyword>
<sequence>MTESTFPQYPRLVLSKGREKSLLRRHPWVFSGAVSRLEGKANLGETIDIVDHQGKWLARGAWSPASQIRARVWTFDKAESIDIAFFTRRLRQAQQWRDWLAKKDGLDSYRLIAGESDGLPGVTIDRFGHFLVLQLLSAGAEYQRAALISALQTCYPDCAIYDRSDVAVRKKEGMALTQGPVTGELPPALLPIEEHGMKLLVDIQGGHKTGYYLDQRDSRLATRRYVENQRVLNCFSYTGGFAVSALMGGCRQVVSVDTSQDALDIARQNVELNQLDLSKAEFVRDDVFKLLRAYREHGEKFDVIIMDPPKFVENKSQLMGACRGYKDINMLAIQLLNPGGILLTFSCSGLMTSDLFQKIIADAAIDAGRDVQFIEQFRQAADHPVIATYPEGLYLKGFACRVM</sequence>
<protein>
    <recommendedName>
        <fullName evidence="1">Ribosomal RNA large subunit methyltransferase I</fullName>
        <ecNumber evidence="1">2.1.1.191</ecNumber>
    </recommendedName>
    <alternativeName>
        <fullName evidence="1">23S rRNA m5C1962 methyltransferase</fullName>
    </alternativeName>
    <alternativeName>
        <fullName evidence="1">rRNA (cytosine-C(5)-)-methyltransferase RlmI</fullName>
    </alternativeName>
</protein>
<organism>
    <name type="scientific">Salmonella heidelberg (strain SL476)</name>
    <dbReference type="NCBI Taxonomy" id="454169"/>
    <lineage>
        <taxon>Bacteria</taxon>
        <taxon>Pseudomonadati</taxon>
        <taxon>Pseudomonadota</taxon>
        <taxon>Gammaproteobacteria</taxon>
        <taxon>Enterobacterales</taxon>
        <taxon>Enterobacteriaceae</taxon>
        <taxon>Salmonella</taxon>
    </lineage>
</organism>
<gene>
    <name evidence="1" type="primary">rlmI</name>
    <name type="ordered locus">SeHA_C1189</name>
</gene>
<dbReference type="EC" id="2.1.1.191" evidence="1"/>
<dbReference type="EMBL" id="CP001120">
    <property type="protein sequence ID" value="ACF69005.1"/>
    <property type="molecule type" value="Genomic_DNA"/>
</dbReference>
<dbReference type="RefSeq" id="WP_000140480.1">
    <property type="nucleotide sequence ID" value="NC_011083.1"/>
</dbReference>
<dbReference type="SMR" id="B4TE06"/>
<dbReference type="KEGG" id="seh:SeHA_C1189"/>
<dbReference type="HOGENOM" id="CLU_014042_0_0_6"/>
<dbReference type="Proteomes" id="UP000001866">
    <property type="component" value="Chromosome"/>
</dbReference>
<dbReference type="GO" id="GO:0005737">
    <property type="term" value="C:cytoplasm"/>
    <property type="evidence" value="ECO:0007669"/>
    <property type="project" value="UniProtKB-SubCell"/>
</dbReference>
<dbReference type="GO" id="GO:0003723">
    <property type="term" value="F:RNA binding"/>
    <property type="evidence" value="ECO:0007669"/>
    <property type="project" value="UniProtKB-KW"/>
</dbReference>
<dbReference type="GO" id="GO:0016434">
    <property type="term" value="F:rRNA (cytosine) methyltransferase activity"/>
    <property type="evidence" value="ECO:0007669"/>
    <property type="project" value="UniProtKB-UniRule"/>
</dbReference>
<dbReference type="CDD" id="cd02440">
    <property type="entry name" value="AdoMet_MTases"/>
    <property type="match status" value="1"/>
</dbReference>
<dbReference type="CDD" id="cd21153">
    <property type="entry name" value="PUA_RlmI"/>
    <property type="match status" value="1"/>
</dbReference>
<dbReference type="CDD" id="cd11572">
    <property type="entry name" value="RlmI_M_like"/>
    <property type="match status" value="1"/>
</dbReference>
<dbReference type="FunFam" id="3.40.50.150:FF:000044">
    <property type="entry name" value="Ribosomal RNA large subunit methyltransferase I"/>
    <property type="match status" value="1"/>
</dbReference>
<dbReference type="Gene3D" id="2.30.130.10">
    <property type="entry name" value="PUA domain"/>
    <property type="match status" value="1"/>
</dbReference>
<dbReference type="Gene3D" id="3.30.750.80">
    <property type="entry name" value="RNA methyltransferase domain (HRMD) like"/>
    <property type="match status" value="1"/>
</dbReference>
<dbReference type="Gene3D" id="3.40.50.150">
    <property type="entry name" value="Vaccinia Virus protein VP39"/>
    <property type="match status" value="1"/>
</dbReference>
<dbReference type="HAMAP" id="MF_01857">
    <property type="entry name" value="23SrRNA_methyltr_I"/>
    <property type="match status" value="1"/>
</dbReference>
<dbReference type="InterPro" id="IPR002478">
    <property type="entry name" value="PUA"/>
</dbReference>
<dbReference type="InterPro" id="IPR015947">
    <property type="entry name" value="PUA-like_sf"/>
</dbReference>
<dbReference type="InterPro" id="IPR036974">
    <property type="entry name" value="PUA_sf"/>
</dbReference>
<dbReference type="InterPro" id="IPR023542">
    <property type="entry name" value="RLMI"/>
</dbReference>
<dbReference type="InterPro" id="IPR041532">
    <property type="entry name" value="RlmI-like_PUA"/>
</dbReference>
<dbReference type="InterPro" id="IPR019614">
    <property type="entry name" value="SAM-dep_methyl-trfase"/>
</dbReference>
<dbReference type="InterPro" id="IPR029063">
    <property type="entry name" value="SAM-dependent_MTases_sf"/>
</dbReference>
<dbReference type="NCBIfam" id="NF011707">
    <property type="entry name" value="PRK15128.1"/>
    <property type="match status" value="1"/>
</dbReference>
<dbReference type="PANTHER" id="PTHR42873">
    <property type="entry name" value="RIBOSOMAL RNA LARGE SUBUNIT METHYLTRANSFERASE"/>
    <property type="match status" value="1"/>
</dbReference>
<dbReference type="PANTHER" id="PTHR42873:SF1">
    <property type="entry name" value="S-ADENOSYLMETHIONINE-DEPENDENT METHYLTRANSFERASE DOMAIN-CONTAINING PROTEIN"/>
    <property type="match status" value="1"/>
</dbReference>
<dbReference type="Pfam" id="PF10672">
    <property type="entry name" value="Methyltrans_SAM"/>
    <property type="match status" value="1"/>
</dbReference>
<dbReference type="Pfam" id="PF17785">
    <property type="entry name" value="PUA_3"/>
    <property type="match status" value="1"/>
</dbReference>
<dbReference type="SMART" id="SM00359">
    <property type="entry name" value="PUA"/>
    <property type="match status" value="1"/>
</dbReference>
<dbReference type="SUPFAM" id="SSF88697">
    <property type="entry name" value="PUA domain-like"/>
    <property type="match status" value="1"/>
</dbReference>
<dbReference type="SUPFAM" id="SSF53335">
    <property type="entry name" value="S-adenosyl-L-methionine-dependent methyltransferases"/>
    <property type="match status" value="1"/>
</dbReference>
<dbReference type="PROSITE" id="PS50890">
    <property type="entry name" value="PUA"/>
    <property type="match status" value="1"/>
</dbReference>
<accession>B4TE06</accession>
<evidence type="ECO:0000255" key="1">
    <source>
        <dbReference type="HAMAP-Rule" id="MF_01857"/>
    </source>
</evidence>
<proteinExistence type="inferred from homology"/>
<reference key="1">
    <citation type="journal article" date="2011" name="J. Bacteriol.">
        <title>Comparative genomics of 28 Salmonella enterica isolates: evidence for CRISPR-mediated adaptive sublineage evolution.</title>
        <authorList>
            <person name="Fricke W.F."/>
            <person name="Mammel M.K."/>
            <person name="McDermott P.F."/>
            <person name="Tartera C."/>
            <person name="White D.G."/>
            <person name="Leclerc J.E."/>
            <person name="Ravel J."/>
            <person name="Cebula T.A."/>
        </authorList>
    </citation>
    <scope>NUCLEOTIDE SEQUENCE [LARGE SCALE GENOMIC DNA]</scope>
    <source>
        <strain>SL476</strain>
    </source>
</reference>
<feature type="chain" id="PRO_0000366245" description="Ribosomal RNA large subunit methyltransferase I">
    <location>
        <begin position="1"/>
        <end position="403"/>
    </location>
</feature>
<feature type="domain" description="PUA" evidence="1">
    <location>
        <begin position="9"/>
        <end position="88"/>
    </location>
</feature>
<name>RLMI_SALHS</name>